<evidence type="ECO:0000255" key="1">
    <source>
        <dbReference type="HAMAP-Rule" id="MF_00041"/>
    </source>
</evidence>
<name>SYC_ECO55</name>
<sequence>MLKIFNTLTRQKEEFKPIHAGEVGMYVCGITVYDLCHIGHGRTFVAFDVVARYLRFLGYKLKYVRNITDIDDKIIKRANENGESFVALVDRMIAEMHKDFDALNILRPDMEPRATHHIAEIIELTEQLIAKGHAYVADNGDVMFDVPTDPTYGVLSRQDLDQLQAGARVDVVDDKRNPMDFVLWKMSKEGEPSWPSPWGAGRPGWHIECSAMNCKQLGNHFDIHGGGSDLMFPHHENEIAQSTCAHDGQYVNYWMHSGMVMVDREKMSKSLGNFFTVRDVLKYYDAETVRYFLMSGHYRSQLNYSEENLKQARAALERLYTALRGTDKTVAPAGGEAFEARFIEAMDDDFNTPEAYSVLFDMAREVNRLKAEDMAAANAMASHLRKLSAVLGLLEQEPEAFLQSGAQADDSEVAEIEALIQQRLDARKAKDWAAADAARDRLNEMGIVLEDGPQGTTWRRK</sequence>
<accession>B7L7F3</accession>
<protein>
    <recommendedName>
        <fullName evidence="1">Cysteine--tRNA ligase</fullName>
        <ecNumber evidence="1">6.1.1.16</ecNumber>
    </recommendedName>
    <alternativeName>
        <fullName evidence="1">Cysteinyl-tRNA synthetase</fullName>
        <shortName evidence="1">CysRS</shortName>
    </alternativeName>
</protein>
<keyword id="KW-0030">Aminoacyl-tRNA synthetase</keyword>
<keyword id="KW-0067">ATP-binding</keyword>
<keyword id="KW-0963">Cytoplasm</keyword>
<keyword id="KW-0436">Ligase</keyword>
<keyword id="KW-0479">Metal-binding</keyword>
<keyword id="KW-0547">Nucleotide-binding</keyword>
<keyword id="KW-0648">Protein biosynthesis</keyword>
<keyword id="KW-1185">Reference proteome</keyword>
<keyword id="KW-0862">Zinc</keyword>
<gene>
    <name evidence="1" type="primary">cysS</name>
    <name type="ordered locus">EC55989_0540</name>
</gene>
<proteinExistence type="inferred from homology"/>
<organism>
    <name type="scientific">Escherichia coli (strain 55989 / EAEC)</name>
    <dbReference type="NCBI Taxonomy" id="585055"/>
    <lineage>
        <taxon>Bacteria</taxon>
        <taxon>Pseudomonadati</taxon>
        <taxon>Pseudomonadota</taxon>
        <taxon>Gammaproteobacteria</taxon>
        <taxon>Enterobacterales</taxon>
        <taxon>Enterobacteriaceae</taxon>
        <taxon>Escherichia</taxon>
    </lineage>
</organism>
<comment type="catalytic activity">
    <reaction evidence="1">
        <text>tRNA(Cys) + L-cysteine + ATP = L-cysteinyl-tRNA(Cys) + AMP + diphosphate</text>
        <dbReference type="Rhea" id="RHEA:17773"/>
        <dbReference type="Rhea" id="RHEA-COMP:9661"/>
        <dbReference type="Rhea" id="RHEA-COMP:9679"/>
        <dbReference type="ChEBI" id="CHEBI:30616"/>
        <dbReference type="ChEBI" id="CHEBI:33019"/>
        <dbReference type="ChEBI" id="CHEBI:35235"/>
        <dbReference type="ChEBI" id="CHEBI:78442"/>
        <dbReference type="ChEBI" id="CHEBI:78517"/>
        <dbReference type="ChEBI" id="CHEBI:456215"/>
        <dbReference type="EC" id="6.1.1.16"/>
    </reaction>
</comment>
<comment type="cofactor">
    <cofactor evidence="1">
        <name>Zn(2+)</name>
        <dbReference type="ChEBI" id="CHEBI:29105"/>
    </cofactor>
    <text evidence="1">Binds 1 zinc ion per subunit.</text>
</comment>
<comment type="subunit">
    <text evidence="1">Monomer.</text>
</comment>
<comment type="subcellular location">
    <subcellularLocation>
        <location evidence="1">Cytoplasm</location>
    </subcellularLocation>
</comment>
<comment type="similarity">
    <text evidence="1">Belongs to the class-I aminoacyl-tRNA synthetase family.</text>
</comment>
<feature type="chain" id="PRO_1000199062" description="Cysteine--tRNA ligase">
    <location>
        <begin position="1"/>
        <end position="461"/>
    </location>
</feature>
<feature type="short sequence motif" description="'HIGH' region">
    <location>
        <begin position="30"/>
        <end position="40"/>
    </location>
</feature>
<feature type="short sequence motif" description="'KMSKS' region">
    <location>
        <begin position="266"/>
        <end position="270"/>
    </location>
</feature>
<feature type="binding site" evidence="1">
    <location>
        <position position="28"/>
    </location>
    <ligand>
        <name>Zn(2+)</name>
        <dbReference type="ChEBI" id="CHEBI:29105"/>
    </ligand>
</feature>
<feature type="binding site" evidence="1">
    <location>
        <position position="209"/>
    </location>
    <ligand>
        <name>Zn(2+)</name>
        <dbReference type="ChEBI" id="CHEBI:29105"/>
    </ligand>
</feature>
<feature type="binding site" evidence="1">
    <location>
        <position position="234"/>
    </location>
    <ligand>
        <name>Zn(2+)</name>
        <dbReference type="ChEBI" id="CHEBI:29105"/>
    </ligand>
</feature>
<feature type="binding site" evidence="1">
    <location>
        <position position="238"/>
    </location>
    <ligand>
        <name>Zn(2+)</name>
        <dbReference type="ChEBI" id="CHEBI:29105"/>
    </ligand>
</feature>
<feature type="binding site" evidence="1">
    <location>
        <position position="269"/>
    </location>
    <ligand>
        <name>ATP</name>
        <dbReference type="ChEBI" id="CHEBI:30616"/>
    </ligand>
</feature>
<dbReference type="EC" id="6.1.1.16" evidence="1"/>
<dbReference type="EMBL" id="CU928145">
    <property type="protein sequence ID" value="CAU96413.1"/>
    <property type="molecule type" value="Genomic_DNA"/>
</dbReference>
<dbReference type="RefSeq" id="WP_000912345.1">
    <property type="nucleotide sequence ID" value="NC_011748.1"/>
</dbReference>
<dbReference type="SMR" id="B7L7F3"/>
<dbReference type="GeneID" id="75204392"/>
<dbReference type="KEGG" id="eck:EC55989_0540"/>
<dbReference type="HOGENOM" id="CLU_013528_0_1_6"/>
<dbReference type="Proteomes" id="UP000000746">
    <property type="component" value="Chromosome"/>
</dbReference>
<dbReference type="GO" id="GO:0005829">
    <property type="term" value="C:cytosol"/>
    <property type="evidence" value="ECO:0007669"/>
    <property type="project" value="TreeGrafter"/>
</dbReference>
<dbReference type="GO" id="GO:0005524">
    <property type="term" value="F:ATP binding"/>
    <property type="evidence" value="ECO:0007669"/>
    <property type="project" value="UniProtKB-UniRule"/>
</dbReference>
<dbReference type="GO" id="GO:0004817">
    <property type="term" value="F:cysteine-tRNA ligase activity"/>
    <property type="evidence" value="ECO:0007669"/>
    <property type="project" value="UniProtKB-UniRule"/>
</dbReference>
<dbReference type="GO" id="GO:0008270">
    <property type="term" value="F:zinc ion binding"/>
    <property type="evidence" value="ECO:0007669"/>
    <property type="project" value="UniProtKB-UniRule"/>
</dbReference>
<dbReference type="GO" id="GO:0006423">
    <property type="term" value="P:cysteinyl-tRNA aminoacylation"/>
    <property type="evidence" value="ECO:0007669"/>
    <property type="project" value="UniProtKB-UniRule"/>
</dbReference>
<dbReference type="CDD" id="cd07963">
    <property type="entry name" value="Anticodon_Ia_Cys"/>
    <property type="match status" value="1"/>
</dbReference>
<dbReference type="CDD" id="cd00672">
    <property type="entry name" value="CysRS_core"/>
    <property type="match status" value="1"/>
</dbReference>
<dbReference type="FunFam" id="1.20.120.1910:FF:000001">
    <property type="entry name" value="Cysteine--tRNA ligase"/>
    <property type="match status" value="1"/>
</dbReference>
<dbReference type="FunFam" id="3.40.50.620:FF:000009">
    <property type="entry name" value="Cysteine--tRNA ligase"/>
    <property type="match status" value="1"/>
</dbReference>
<dbReference type="Gene3D" id="1.20.120.1910">
    <property type="entry name" value="Cysteine-tRNA ligase, C-terminal anti-codon recognition domain"/>
    <property type="match status" value="1"/>
</dbReference>
<dbReference type="Gene3D" id="3.40.50.620">
    <property type="entry name" value="HUPs"/>
    <property type="match status" value="1"/>
</dbReference>
<dbReference type="HAMAP" id="MF_00041">
    <property type="entry name" value="Cys_tRNA_synth"/>
    <property type="match status" value="1"/>
</dbReference>
<dbReference type="InterPro" id="IPR015803">
    <property type="entry name" value="Cys-tRNA-ligase"/>
</dbReference>
<dbReference type="InterPro" id="IPR015273">
    <property type="entry name" value="Cys-tRNA-synt_Ia_DALR"/>
</dbReference>
<dbReference type="InterPro" id="IPR024909">
    <property type="entry name" value="Cys-tRNA/MSH_ligase"/>
</dbReference>
<dbReference type="InterPro" id="IPR056411">
    <property type="entry name" value="CysS_C"/>
</dbReference>
<dbReference type="InterPro" id="IPR014729">
    <property type="entry name" value="Rossmann-like_a/b/a_fold"/>
</dbReference>
<dbReference type="InterPro" id="IPR032678">
    <property type="entry name" value="tRNA-synt_1_cat_dom"/>
</dbReference>
<dbReference type="InterPro" id="IPR009080">
    <property type="entry name" value="tRNAsynth_Ia_anticodon-bd"/>
</dbReference>
<dbReference type="NCBIfam" id="TIGR00435">
    <property type="entry name" value="cysS"/>
    <property type="match status" value="1"/>
</dbReference>
<dbReference type="PANTHER" id="PTHR10890:SF3">
    <property type="entry name" value="CYSTEINE--TRNA LIGASE, CYTOPLASMIC"/>
    <property type="match status" value="1"/>
</dbReference>
<dbReference type="PANTHER" id="PTHR10890">
    <property type="entry name" value="CYSTEINYL-TRNA SYNTHETASE"/>
    <property type="match status" value="1"/>
</dbReference>
<dbReference type="Pfam" id="PF23493">
    <property type="entry name" value="CysS_C"/>
    <property type="match status" value="1"/>
</dbReference>
<dbReference type="Pfam" id="PF09190">
    <property type="entry name" value="DALR_2"/>
    <property type="match status" value="1"/>
</dbReference>
<dbReference type="Pfam" id="PF01406">
    <property type="entry name" value="tRNA-synt_1e"/>
    <property type="match status" value="1"/>
</dbReference>
<dbReference type="PRINTS" id="PR00983">
    <property type="entry name" value="TRNASYNTHCYS"/>
</dbReference>
<dbReference type="SMART" id="SM00840">
    <property type="entry name" value="DALR_2"/>
    <property type="match status" value="1"/>
</dbReference>
<dbReference type="SUPFAM" id="SSF47323">
    <property type="entry name" value="Anticodon-binding domain of a subclass of class I aminoacyl-tRNA synthetases"/>
    <property type="match status" value="1"/>
</dbReference>
<dbReference type="SUPFAM" id="SSF52374">
    <property type="entry name" value="Nucleotidylyl transferase"/>
    <property type="match status" value="1"/>
</dbReference>
<reference key="1">
    <citation type="journal article" date="2009" name="PLoS Genet.">
        <title>Organised genome dynamics in the Escherichia coli species results in highly diverse adaptive paths.</title>
        <authorList>
            <person name="Touchon M."/>
            <person name="Hoede C."/>
            <person name="Tenaillon O."/>
            <person name="Barbe V."/>
            <person name="Baeriswyl S."/>
            <person name="Bidet P."/>
            <person name="Bingen E."/>
            <person name="Bonacorsi S."/>
            <person name="Bouchier C."/>
            <person name="Bouvet O."/>
            <person name="Calteau A."/>
            <person name="Chiapello H."/>
            <person name="Clermont O."/>
            <person name="Cruveiller S."/>
            <person name="Danchin A."/>
            <person name="Diard M."/>
            <person name="Dossat C."/>
            <person name="Karoui M.E."/>
            <person name="Frapy E."/>
            <person name="Garry L."/>
            <person name="Ghigo J.M."/>
            <person name="Gilles A.M."/>
            <person name="Johnson J."/>
            <person name="Le Bouguenec C."/>
            <person name="Lescat M."/>
            <person name="Mangenot S."/>
            <person name="Martinez-Jehanne V."/>
            <person name="Matic I."/>
            <person name="Nassif X."/>
            <person name="Oztas S."/>
            <person name="Petit M.A."/>
            <person name="Pichon C."/>
            <person name="Rouy Z."/>
            <person name="Ruf C.S."/>
            <person name="Schneider D."/>
            <person name="Tourret J."/>
            <person name="Vacherie B."/>
            <person name="Vallenet D."/>
            <person name="Medigue C."/>
            <person name="Rocha E.P.C."/>
            <person name="Denamur E."/>
        </authorList>
    </citation>
    <scope>NUCLEOTIDE SEQUENCE [LARGE SCALE GENOMIC DNA]</scope>
    <source>
        <strain>55989 / EAEC</strain>
    </source>
</reference>